<evidence type="ECO:0000255" key="1">
    <source>
        <dbReference type="HAMAP-Rule" id="MF_01716"/>
    </source>
</evidence>
<evidence type="ECO:0000305" key="2"/>
<name>RBSA2_BURCM</name>
<keyword id="KW-0067">ATP-binding</keyword>
<keyword id="KW-0997">Cell inner membrane</keyword>
<keyword id="KW-1003">Cell membrane</keyword>
<keyword id="KW-0472">Membrane</keyword>
<keyword id="KW-0547">Nucleotide-binding</keyword>
<keyword id="KW-0677">Repeat</keyword>
<keyword id="KW-0762">Sugar transport</keyword>
<keyword id="KW-1278">Translocase</keyword>
<keyword id="KW-0813">Transport</keyword>
<proteinExistence type="inferred from homology"/>
<accession>Q0B7X0</accession>
<gene>
    <name evidence="1" type="primary">rbsA2</name>
    <name type="ordered locus">Bamb_4200</name>
</gene>
<sequence>MDTILRLSHITKSFPGVKALSDIHLEIVRGEIHALLGENGAGKSTLMKILCGIHQPDAGTIEIDGTARHFTSYHDAVAAGVGIVFQEFSLIPHLDAVDNLFLGRELRTRWGVRDRARMRRAAAGIFARLGVSIDLDAPLRTLSVAQQQFVEIGKALSLDARILILDEPTATLTPAEAEHLFAIMRELKRQGVAMIFISHHLDEIFAVCDRITVLRDGQYVATTDVSSTDVEQLVRMMVGRRLESSFPPKPVRAADAPAVLEVDALQIERDGPVNRFALHAGEILGFAGLVGSGRTETALAVIGATRAHRKTVRVRGTPAKLADPADALRAGIGLLPESRKTEGLVTSFSIRDNISLNNLGKYRSMRWLIDRRGEARTTHDVMRRVGVKAPSIHTEVATLSGGNQQKVVIARWLNHHASVLIFDEPTRGIDVGAKAEIYGLMRELTARGYAIIMISSELPEIVGMCDRVAVFRQGRIEATLEGDEIDPDTVMTHATAGTRGATHEPA</sequence>
<comment type="function">
    <text evidence="1">Part of the ABC transporter complex RbsABC involved in ribose import. Responsible for energy coupling to the transport system.</text>
</comment>
<comment type="catalytic activity">
    <reaction evidence="1">
        <text>D-ribose(out) + ATP + H2O = D-ribose(in) + ADP + phosphate + H(+)</text>
        <dbReference type="Rhea" id="RHEA:29903"/>
        <dbReference type="ChEBI" id="CHEBI:15377"/>
        <dbReference type="ChEBI" id="CHEBI:15378"/>
        <dbReference type="ChEBI" id="CHEBI:30616"/>
        <dbReference type="ChEBI" id="CHEBI:43474"/>
        <dbReference type="ChEBI" id="CHEBI:47013"/>
        <dbReference type="ChEBI" id="CHEBI:456216"/>
        <dbReference type="EC" id="7.5.2.7"/>
    </reaction>
</comment>
<comment type="subunit">
    <text evidence="1">The complex is composed of an ATP-binding protein (RbsA), two transmembrane proteins (RbsC) and a solute-binding protein (RbsB).</text>
</comment>
<comment type="subcellular location">
    <subcellularLocation>
        <location evidence="1">Cell inner membrane</location>
        <topology evidence="1">Peripheral membrane protein</topology>
    </subcellularLocation>
</comment>
<comment type="similarity">
    <text evidence="1">Belongs to the ABC transporter superfamily. Ribose importer (TC 3.A.1.2.1) family.</text>
</comment>
<comment type="sequence caution" evidence="2">
    <conflict type="erroneous initiation">
        <sequence resource="EMBL-CDS" id="ABI89753"/>
    </conflict>
</comment>
<reference key="1">
    <citation type="submission" date="2006-08" db="EMBL/GenBank/DDBJ databases">
        <title>Complete sequence of chromosome 2 of Burkholderia cepacia AMMD.</title>
        <authorList>
            <person name="Copeland A."/>
            <person name="Lucas S."/>
            <person name="Lapidus A."/>
            <person name="Barry K."/>
            <person name="Detter J.C."/>
            <person name="Glavina del Rio T."/>
            <person name="Hammon N."/>
            <person name="Israni S."/>
            <person name="Pitluck S."/>
            <person name="Bruce D."/>
            <person name="Chain P."/>
            <person name="Malfatti S."/>
            <person name="Shin M."/>
            <person name="Vergez L."/>
            <person name="Schmutz J."/>
            <person name="Larimer F."/>
            <person name="Land M."/>
            <person name="Hauser L."/>
            <person name="Kyrpides N."/>
            <person name="Kim E."/>
            <person name="Parke J."/>
            <person name="Coenye T."/>
            <person name="Konstantinidis K."/>
            <person name="Ramette A."/>
            <person name="Tiedje J."/>
            <person name="Richardson P."/>
        </authorList>
    </citation>
    <scope>NUCLEOTIDE SEQUENCE [LARGE SCALE GENOMIC DNA]</scope>
    <source>
        <strain>ATCC BAA-244 / DSM 16087 / CCUG 44356 / LMG 19182 / AMMD</strain>
    </source>
</reference>
<protein>
    <recommendedName>
        <fullName evidence="1">Ribose import ATP-binding protein RbsA 2</fullName>
        <ecNumber evidence="1">7.5.2.7</ecNumber>
    </recommendedName>
</protein>
<dbReference type="EC" id="7.5.2.7" evidence="1"/>
<dbReference type="EMBL" id="CP000441">
    <property type="protein sequence ID" value="ABI89753.1"/>
    <property type="status" value="ALT_INIT"/>
    <property type="molecule type" value="Genomic_DNA"/>
</dbReference>
<dbReference type="RefSeq" id="WP_041491670.1">
    <property type="nucleotide sequence ID" value="NC_008391.1"/>
</dbReference>
<dbReference type="SMR" id="Q0B7X0"/>
<dbReference type="KEGG" id="bam:Bamb_4200"/>
<dbReference type="PATRIC" id="fig|339670.21.peg.4497"/>
<dbReference type="eggNOG" id="COG1129">
    <property type="taxonomic scope" value="Bacteria"/>
</dbReference>
<dbReference type="Proteomes" id="UP000000662">
    <property type="component" value="Chromosome 2"/>
</dbReference>
<dbReference type="GO" id="GO:0005886">
    <property type="term" value="C:plasma membrane"/>
    <property type="evidence" value="ECO:0007669"/>
    <property type="project" value="UniProtKB-SubCell"/>
</dbReference>
<dbReference type="GO" id="GO:0015611">
    <property type="term" value="F:ABC-type D-ribose transporter activity"/>
    <property type="evidence" value="ECO:0007669"/>
    <property type="project" value="UniProtKB-EC"/>
</dbReference>
<dbReference type="GO" id="GO:0005524">
    <property type="term" value="F:ATP binding"/>
    <property type="evidence" value="ECO:0007669"/>
    <property type="project" value="UniProtKB-KW"/>
</dbReference>
<dbReference type="GO" id="GO:0016887">
    <property type="term" value="F:ATP hydrolysis activity"/>
    <property type="evidence" value="ECO:0007669"/>
    <property type="project" value="InterPro"/>
</dbReference>
<dbReference type="CDD" id="cd03216">
    <property type="entry name" value="ABC_Carb_Monos_I"/>
    <property type="match status" value="1"/>
</dbReference>
<dbReference type="CDD" id="cd03215">
    <property type="entry name" value="ABC_Carb_Monos_II"/>
    <property type="match status" value="1"/>
</dbReference>
<dbReference type="FunFam" id="3.40.50.300:FF:000127">
    <property type="entry name" value="Ribose import ATP-binding protein RbsA"/>
    <property type="match status" value="1"/>
</dbReference>
<dbReference type="Gene3D" id="3.40.50.300">
    <property type="entry name" value="P-loop containing nucleotide triphosphate hydrolases"/>
    <property type="match status" value="2"/>
</dbReference>
<dbReference type="InterPro" id="IPR003593">
    <property type="entry name" value="AAA+_ATPase"/>
</dbReference>
<dbReference type="InterPro" id="IPR050107">
    <property type="entry name" value="ABC_carbohydrate_import_ATPase"/>
</dbReference>
<dbReference type="InterPro" id="IPR003439">
    <property type="entry name" value="ABC_transporter-like_ATP-bd"/>
</dbReference>
<dbReference type="InterPro" id="IPR017871">
    <property type="entry name" value="ABC_transporter-like_CS"/>
</dbReference>
<dbReference type="InterPro" id="IPR027417">
    <property type="entry name" value="P-loop_NTPase"/>
</dbReference>
<dbReference type="PANTHER" id="PTHR43790">
    <property type="entry name" value="CARBOHYDRATE TRANSPORT ATP-BINDING PROTEIN MG119-RELATED"/>
    <property type="match status" value="1"/>
</dbReference>
<dbReference type="PANTHER" id="PTHR43790:SF3">
    <property type="entry name" value="D-ALLOSE IMPORT ATP-BINDING PROTEIN ALSA-RELATED"/>
    <property type="match status" value="1"/>
</dbReference>
<dbReference type="Pfam" id="PF00005">
    <property type="entry name" value="ABC_tran"/>
    <property type="match status" value="2"/>
</dbReference>
<dbReference type="SMART" id="SM00382">
    <property type="entry name" value="AAA"/>
    <property type="match status" value="2"/>
</dbReference>
<dbReference type="SUPFAM" id="SSF52540">
    <property type="entry name" value="P-loop containing nucleoside triphosphate hydrolases"/>
    <property type="match status" value="2"/>
</dbReference>
<dbReference type="PROSITE" id="PS00211">
    <property type="entry name" value="ABC_TRANSPORTER_1"/>
    <property type="match status" value="1"/>
</dbReference>
<dbReference type="PROSITE" id="PS50893">
    <property type="entry name" value="ABC_TRANSPORTER_2"/>
    <property type="match status" value="2"/>
</dbReference>
<dbReference type="PROSITE" id="PS51254">
    <property type="entry name" value="RBSA"/>
    <property type="match status" value="1"/>
</dbReference>
<organism>
    <name type="scientific">Burkholderia ambifaria (strain ATCC BAA-244 / DSM 16087 / CCUG 44356 / LMG 19182 / AMMD)</name>
    <name type="common">Burkholderia cepacia (strain AMMD)</name>
    <dbReference type="NCBI Taxonomy" id="339670"/>
    <lineage>
        <taxon>Bacteria</taxon>
        <taxon>Pseudomonadati</taxon>
        <taxon>Pseudomonadota</taxon>
        <taxon>Betaproteobacteria</taxon>
        <taxon>Burkholderiales</taxon>
        <taxon>Burkholderiaceae</taxon>
        <taxon>Burkholderia</taxon>
        <taxon>Burkholderia cepacia complex</taxon>
    </lineage>
</organism>
<feature type="chain" id="PRO_0000277514" description="Ribose import ATP-binding protein RbsA 2">
    <location>
        <begin position="1"/>
        <end position="506"/>
    </location>
</feature>
<feature type="domain" description="ABC transporter 1" evidence="1">
    <location>
        <begin position="5"/>
        <end position="241"/>
    </location>
</feature>
<feature type="domain" description="ABC transporter 2" evidence="1">
    <location>
        <begin position="251"/>
        <end position="498"/>
    </location>
</feature>
<feature type="binding site" evidence="1">
    <location>
        <begin position="37"/>
        <end position="44"/>
    </location>
    <ligand>
        <name>ATP</name>
        <dbReference type="ChEBI" id="CHEBI:30616"/>
    </ligand>
</feature>